<reference key="1">
    <citation type="journal article" date="2009" name="J. Bacteriol.">
        <title>Genome sequences of three Agrobacterium biovars help elucidate the evolution of multichromosome genomes in bacteria.</title>
        <authorList>
            <person name="Slater S.C."/>
            <person name="Goldman B.S."/>
            <person name="Goodner B."/>
            <person name="Setubal J.C."/>
            <person name="Farrand S.K."/>
            <person name="Nester E.W."/>
            <person name="Burr T.J."/>
            <person name="Banta L."/>
            <person name="Dickerman A.W."/>
            <person name="Paulsen I."/>
            <person name="Otten L."/>
            <person name="Suen G."/>
            <person name="Welch R."/>
            <person name="Almeida N.F."/>
            <person name="Arnold F."/>
            <person name="Burton O.T."/>
            <person name="Du Z."/>
            <person name="Ewing A."/>
            <person name="Godsy E."/>
            <person name="Heisel S."/>
            <person name="Houmiel K.L."/>
            <person name="Jhaveri J."/>
            <person name="Lu J."/>
            <person name="Miller N.M."/>
            <person name="Norton S."/>
            <person name="Chen Q."/>
            <person name="Phoolcharoen W."/>
            <person name="Ohlin V."/>
            <person name="Ondrusek D."/>
            <person name="Pride N."/>
            <person name="Stricklin S.L."/>
            <person name="Sun J."/>
            <person name="Wheeler C."/>
            <person name="Wilson L."/>
            <person name="Zhu H."/>
            <person name="Wood D.W."/>
        </authorList>
    </citation>
    <scope>NUCLEOTIDE SEQUENCE [LARGE SCALE GENOMIC DNA]</scope>
    <source>
        <strain>K84 / ATCC BAA-868</strain>
    </source>
</reference>
<feature type="chain" id="PRO_1000116557" description="Ribosome maturation factor RimM">
    <location>
        <begin position="1"/>
        <end position="190"/>
    </location>
</feature>
<feature type="domain" description="PRC barrel" evidence="1">
    <location>
        <begin position="95"/>
        <end position="177"/>
    </location>
</feature>
<feature type="region of interest" description="Disordered" evidence="2">
    <location>
        <begin position="170"/>
        <end position="190"/>
    </location>
</feature>
<feature type="compositionally biased region" description="Pro residues" evidence="2">
    <location>
        <begin position="181"/>
        <end position="190"/>
    </location>
</feature>
<keyword id="KW-0143">Chaperone</keyword>
<keyword id="KW-0963">Cytoplasm</keyword>
<keyword id="KW-0690">Ribosome biogenesis</keyword>
<keyword id="KW-0698">rRNA processing</keyword>
<protein>
    <recommendedName>
        <fullName evidence="1">Ribosome maturation factor RimM</fullName>
    </recommendedName>
</protein>
<evidence type="ECO:0000255" key="1">
    <source>
        <dbReference type="HAMAP-Rule" id="MF_00014"/>
    </source>
</evidence>
<evidence type="ECO:0000256" key="2">
    <source>
        <dbReference type="SAM" id="MobiDB-lite"/>
    </source>
</evidence>
<name>RIMM_RHIR8</name>
<sequence>MTKLENPVLMATIGAAQGLRGEVRARAFTSDPTALGDYGHLHSMDGRIFEVLEIREAKNVVIVRFRGVNNRDAAEALNGLELYIERDNLPDDELEDDEFFYTDLEGLEAVDDKGTAYGTVSGVYDFGAGDLLELKGPGKRPVLIPFSEAAVLEIDLEGGKILIDPMAAGLIDSPDDLTGKPPKPPGKTKE</sequence>
<proteinExistence type="inferred from homology"/>
<gene>
    <name evidence="1" type="primary">rimM</name>
    <name type="ordered locus">Arad_4414</name>
</gene>
<dbReference type="EMBL" id="CP000628">
    <property type="protein sequence ID" value="ACM28131.1"/>
    <property type="molecule type" value="Genomic_DNA"/>
</dbReference>
<dbReference type="RefSeq" id="WP_012652715.1">
    <property type="nucleotide sequence ID" value="NC_011985.1"/>
</dbReference>
<dbReference type="SMR" id="B9JCM0"/>
<dbReference type="STRING" id="311403.Arad_4414"/>
<dbReference type="KEGG" id="ara:Arad_4414"/>
<dbReference type="eggNOG" id="COG0806">
    <property type="taxonomic scope" value="Bacteria"/>
</dbReference>
<dbReference type="HOGENOM" id="CLU_077636_0_1_5"/>
<dbReference type="Proteomes" id="UP000001600">
    <property type="component" value="Chromosome 1"/>
</dbReference>
<dbReference type="GO" id="GO:0005737">
    <property type="term" value="C:cytoplasm"/>
    <property type="evidence" value="ECO:0007669"/>
    <property type="project" value="UniProtKB-SubCell"/>
</dbReference>
<dbReference type="GO" id="GO:0005840">
    <property type="term" value="C:ribosome"/>
    <property type="evidence" value="ECO:0007669"/>
    <property type="project" value="InterPro"/>
</dbReference>
<dbReference type="GO" id="GO:0043022">
    <property type="term" value="F:ribosome binding"/>
    <property type="evidence" value="ECO:0007669"/>
    <property type="project" value="InterPro"/>
</dbReference>
<dbReference type="GO" id="GO:0042274">
    <property type="term" value="P:ribosomal small subunit biogenesis"/>
    <property type="evidence" value="ECO:0007669"/>
    <property type="project" value="UniProtKB-UniRule"/>
</dbReference>
<dbReference type="GO" id="GO:0006364">
    <property type="term" value="P:rRNA processing"/>
    <property type="evidence" value="ECO:0007669"/>
    <property type="project" value="UniProtKB-UniRule"/>
</dbReference>
<dbReference type="Gene3D" id="2.30.30.240">
    <property type="entry name" value="PRC-barrel domain"/>
    <property type="match status" value="1"/>
</dbReference>
<dbReference type="Gene3D" id="2.40.30.60">
    <property type="entry name" value="RimM"/>
    <property type="match status" value="1"/>
</dbReference>
<dbReference type="HAMAP" id="MF_00014">
    <property type="entry name" value="Ribosome_mat_RimM"/>
    <property type="match status" value="1"/>
</dbReference>
<dbReference type="InterPro" id="IPR027275">
    <property type="entry name" value="PRC-brl_dom"/>
</dbReference>
<dbReference type="InterPro" id="IPR011033">
    <property type="entry name" value="PRC_barrel-like_sf"/>
</dbReference>
<dbReference type="InterPro" id="IPR011961">
    <property type="entry name" value="RimM"/>
</dbReference>
<dbReference type="InterPro" id="IPR002676">
    <property type="entry name" value="RimM_N"/>
</dbReference>
<dbReference type="InterPro" id="IPR036976">
    <property type="entry name" value="RimM_N_sf"/>
</dbReference>
<dbReference type="InterPro" id="IPR009000">
    <property type="entry name" value="Transl_B-barrel_sf"/>
</dbReference>
<dbReference type="NCBIfam" id="TIGR02273">
    <property type="entry name" value="16S_RimM"/>
    <property type="match status" value="1"/>
</dbReference>
<dbReference type="PANTHER" id="PTHR33692">
    <property type="entry name" value="RIBOSOME MATURATION FACTOR RIMM"/>
    <property type="match status" value="1"/>
</dbReference>
<dbReference type="PANTHER" id="PTHR33692:SF1">
    <property type="entry name" value="RIBOSOME MATURATION FACTOR RIMM"/>
    <property type="match status" value="1"/>
</dbReference>
<dbReference type="Pfam" id="PF05239">
    <property type="entry name" value="PRC"/>
    <property type="match status" value="1"/>
</dbReference>
<dbReference type="Pfam" id="PF01782">
    <property type="entry name" value="RimM"/>
    <property type="match status" value="1"/>
</dbReference>
<dbReference type="SUPFAM" id="SSF50346">
    <property type="entry name" value="PRC-barrel domain"/>
    <property type="match status" value="1"/>
</dbReference>
<dbReference type="SUPFAM" id="SSF50447">
    <property type="entry name" value="Translation proteins"/>
    <property type="match status" value="1"/>
</dbReference>
<accession>B9JCM0</accession>
<organism>
    <name type="scientific">Rhizobium rhizogenes (strain K84 / ATCC BAA-868)</name>
    <name type="common">Agrobacterium radiobacter</name>
    <dbReference type="NCBI Taxonomy" id="311403"/>
    <lineage>
        <taxon>Bacteria</taxon>
        <taxon>Pseudomonadati</taxon>
        <taxon>Pseudomonadota</taxon>
        <taxon>Alphaproteobacteria</taxon>
        <taxon>Hyphomicrobiales</taxon>
        <taxon>Rhizobiaceae</taxon>
        <taxon>Rhizobium/Agrobacterium group</taxon>
        <taxon>Rhizobium</taxon>
    </lineage>
</organism>
<comment type="function">
    <text evidence="1">An accessory protein needed during the final step in the assembly of 30S ribosomal subunit, possibly for assembly of the head region. Essential for efficient processing of 16S rRNA. May be needed both before and after RbfA during the maturation of 16S rRNA. It has affinity for free ribosomal 30S subunits but not for 70S ribosomes.</text>
</comment>
<comment type="subunit">
    <text evidence="1">Binds ribosomal protein uS19.</text>
</comment>
<comment type="subcellular location">
    <subcellularLocation>
        <location evidence="1">Cytoplasm</location>
    </subcellularLocation>
</comment>
<comment type="domain">
    <text evidence="1">The PRC barrel domain binds ribosomal protein uS19.</text>
</comment>
<comment type="similarity">
    <text evidence="1">Belongs to the RimM family.</text>
</comment>